<proteinExistence type="inferred from homology"/>
<dbReference type="EMBL" id="CP001600">
    <property type="protein sequence ID" value="ACR68055.1"/>
    <property type="molecule type" value="Genomic_DNA"/>
</dbReference>
<dbReference type="RefSeq" id="WP_015870248.1">
    <property type="nucleotide sequence ID" value="NZ_CP169062.1"/>
</dbReference>
<dbReference type="SMR" id="C5BHB9"/>
<dbReference type="STRING" id="67780.B6E78_14790"/>
<dbReference type="GeneID" id="69537895"/>
<dbReference type="KEGG" id="eic:NT01EI_0840"/>
<dbReference type="PATRIC" id="fig|634503.3.peg.758"/>
<dbReference type="HOGENOM" id="CLU_073981_2_1_6"/>
<dbReference type="OrthoDB" id="9804006at2"/>
<dbReference type="Proteomes" id="UP000001485">
    <property type="component" value="Chromosome"/>
</dbReference>
<dbReference type="GO" id="GO:0005829">
    <property type="term" value="C:cytosol"/>
    <property type="evidence" value="ECO:0007669"/>
    <property type="project" value="GOC"/>
</dbReference>
<dbReference type="GO" id="GO:0043023">
    <property type="term" value="F:ribosomal large subunit binding"/>
    <property type="evidence" value="ECO:0007669"/>
    <property type="project" value="TreeGrafter"/>
</dbReference>
<dbReference type="GO" id="GO:0002184">
    <property type="term" value="P:cytoplasmic translational termination"/>
    <property type="evidence" value="ECO:0007669"/>
    <property type="project" value="TreeGrafter"/>
</dbReference>
<dbReference type="CDD" id="cd00520">
    <property type="entry name" value="RRF"/>
    <property type="match status" value="1"/>
</dbReference>
<dbReference type="FunFam" id="1.10.132.20:FF:000001">
    <property type="entry name" value="Ribosome-recycling factor"/>
    <property type="match status" value="1"/>
</dbReference>
<dbReference type="FunFam" id="3.30.1360.40:FF:000001">
    <property type="entry name" value="Ribosome-recycling factor"/>
    <property type="match status" value="1"/>
</dbReference>
<dbReference type="Gene3D" id="3.30.1360.40">
    <property type="match status" value="1"/>
</dbReference>
<dbReference type="Gene3D" id="1.10.132.20">
    <property type="entry name" value="Ribosome-recycling factor"/>
    <property type="match status" value="1"/>
</dbReference>
<dbReference type="HAMAP" id="MF_00040">
    <property type="entry name" value="RRF"/>
    <property type="match status" value="1"/>
</dbReference>
<dbReference type="InterPro" id="IPR002661">
    <property type="entry name" value="Ribosome_recyc_fac"/>
</dbReference>
<dbReference type="InterPro" id="IPR023584">
    <property type="entry name" value="Ribosome_recyc_fac_dom"/>
</dbReference>
<dbReference type="InterPro" id="IPR036191">
    <property type="entry name" value="RRF_sf"/>
</dbReference>
<dbReference type="NCBIfam" id="TIGR00496">
    <property type="entry name" value="frr"/>
    <property type="match status" value="1"/>
</dbReference>
<dbReference type="PANTHER" id="PTHR20982:SF3">
    <property type="entry name" value="MITOCHONDRIAL RIBOSOME RECYCLING FACTOR PSEUDO 1"/>
    <property type="match status" value="1"/>
</dbReference>
<dbReference type="PANTHER" id="PTHR20982">
    <property type="entry name" value="RIBOSOME RECYCLING FACTOR"/>
    <property type="match status" value="1"/>
</dbReference>
<dbReference type="Pfam" id="PF01765">
    <property type="entry name" value="RRF"/>
    <property type="match status" value="1"/>
</dbReference>
<dbReference type="SUPFAM" id="SSF55194">
    <property type="entry name" value="Ribosome recycling factor, RRF"/>
    <property type="match status" value="1"/>
</dbReference>
<organism>
    <name type="scientific">Edwardsiella ictaluri (strain 93-146)</name>
    <dbReference type="NCBI Taxonomy" id="634503"/>
    <lineage>
        <taxon>Bacteria</taxon>
        <taxon>Pseudomonadati</taxon>
        <taxon>Pseudomonadota</taxon>
        <taxon>Gammaproteobacteria</taxon>
        <taxon>Enterobacterales</taxon>
        <taxon>Hafniaceae</taxon>
        <taxon>Edwardsiella</taxon>
    </lineage>
</organism>
<evidence type="ECO:0000255" key="1">
    <source>
        <dbReference type="HAMAP-Rule" id="MF_00040"/>
    </source>
</evidence>
<reference key="1">
    <citation type="submission" date="2009-03" db="EMBL/GenBank/DDBJ databases">
        <title>Complete genome sequence of Edwardsiella ictaluri 93-146.</title>
        <authorList>
            <person name="Williams M.L."/>
            <person name="Gillaspy A.F."/>
            <person name="Dyer D.W."/>
            <person name="Thune R.L."/>
            <person name="Waldbieser G.C."/>
            <person name="Schuster S.C."/>
            <person name="Gipson J."/>
            <person name="Zaitshik J."/>
            <person name="Landry C."/>
            <person name="Lawrence M.L."/>
        </authorList>
    </citation>
    <scope>NUCLEOTIDE SEQUENCE [LARGE SCALE GENOMIC DNA]</scope>
    <source>
        <strain>93-146</strain>
    </source>
</reference>
<sequence>MINEIRKDAETRMDKCVESFKGNISKIRTGRAHPNLLDGIQVEYYGTATPLRQLANIVAEDSRTLALTVFDRSMSGAIEKAILTSDLGLNPASAGTVIRVPLPPLTEERRKDLIKLVRSEAESGRVSVRNVRRDANDKVKALLKDKEISEDEDRKSQEEIQKITDLMIKKIDAALADKEKELMDF</sequence>
<accession>C5BHB9</accession>
<name>RRF_EDWI9</name>
<protein>
    <recommendedName>
        <fullName evidence="1">Ribosome-recycling factor</fullName>
        <shortName evidence="1">RRF</shortName>
    </recommendedName>
    <alternativeName>
        <fullName evidence="1">Ribosome-releasing factor</fullName>
    </alternativeName>
</protein>
<gene>
    <name evidence="1" type="primary">frr</name>
    <name type="ordered locus">NT01EI_0840</name>
</gene>
<comment type="function">
    <text evidence="1">Responsible for the release of ribosomes from messenger RNA at the termination of protein biosynthesis. May increase the efficiency of translation by recycling ribosomes from one round of translation to another.</text>
</comment>
<comment type="subcellular location">
    <subcellularLocation>
        <location evidence="1">Cytoplasm</location>
    </subcellularLocation>
</comment>
<comment type="similarity">
    <text evidence="1">Belongs to the RRF family.</text>
</comment>
<keyword id="KW-0963">Cytoplasm</keyword>
<keyword id="KW-0648">Protein biosynthesis</keyword>
<feature type="chain" id="PRO_1000202097" description="Ribosome-recycling factor">
    <location>
        <begin position="1"/>
        <end position="185"/>
    </location>
</feature>